<gene>
    <name type="primary">MT-CYB</name>
    <name type="synonym">COB</name>
    <name type="synonym">CYTB</name>
    <name type="synonym">MTCYB</name>
</gene>
<geneLocation type="mitochondrion"/>
<organism>
    <name type="scientific">Rupicapra pyrenaica</name>
    <name type="common">Pyrenean chamois</name>
    <dbReference type="NCBI Taxonomy" id="72545"/>
    <lineage>
        <taxon>Eukaryota</taxon>
        <taxon>Metazoa</taxon>
        <taxon>Chordata</taxon>
        <taxon>Craniata</taxon>
        <taxon>Vertebrata</taxon>
        <taxon>Euteleostomi</taxon>
        <taxon>Mammalia</taxon>
        <taxon>Eutheria</taxon>
        <taxon>Laurasiatheria</taxon>
        <taxon>Artiodactyla</taxon>
        <taxon>Ruminantia</taxon>
        <taxon>Pecora</taxon>
        <taxon>Bovidae</taxon>
        <taxon>Caprinae</taxon>
        <taxon>Rupicapra</taxon>
    </lineage>
</organism>
<evidence type="ECO:0000250" key="1"/>
<evidence type="ECO:0000250" key="2">
    <source>
        <dbReference type="UniProtKB" id="P00157"/>
    </source>
</evidence>
<evidence type="ECO:0000255" key="3">
    <source>
        <dbReference type="PROSITE-ProRule" id="PRU00967"/>
    </source>
</evidence>
<evidence type="ECO:0000255" key="4">
    <source>
        <dbReference type="PROSITE-ProRule" id="PRU00968"/>
    </source>
</evidence>
<keyword id="KW-0249">Electron transport</keyword>
<keyword id="KW-0349">Heme</keyword>
<keyword id="KW-0408">Iron</keyword>
<keyword id="KW-0472">Membrane</keyword>
<keyword id="KW-0479">Metal-binding</keyword>
<keyword id="KW-0496">Mitochondrion</keyword>
<keyword id="KW-0999">Mitochondrion inner membrane</keyword>
<keyword id="KW-0679">Respiratory chain</keyword>
<keyword id="KW-0812">Transmembrane</keyword>
<keyword id="KW-1133">Transmembrane helix</keyword>
<keyword id="KW-0813">Transport</keyword>
<keyword id="KW-0830">Ubiquinone</keyword>
<comment type="function">
    <text evidence="2">Component of the ubiquinol-cytochrome c reductase complex (complex III or cytochrome b-c1 complex) that is part of the mitochondrial respiratory chain. The b-c1 complex mediates electron transfer from ubiquinol to cytochrome c. Contributes to the generation of a proton gradient across the mitochondrial membrane that is then used for ATP synthesis.</text>
</comment>
<comment type="cofactor">
    <cofactor evidence="2">
        <name>heme b</name>
        <dbReference type="ChEBI" id="CHEBI:60344"/>
    </cofactor>
    <text evidence="2">Binds 2 heme b groups non-covalently.</text>
</comment>
<comment type="subunit">
    <text evidence="2">The cytochrome bc1 complex contains 11 subunits: 3 respiratory subunits (MT-CYB, CYC1 and UQCRFS1), 2 core proteins (UQCRC1 and UQCRC2) and 6 low-molecular weight proteins (UQCRH/QCR6, UQCRB/QCR7, UQCRQ/QCR8, UQCR10/QCR9, UQCR11/QCR10 and a cleavage product of UQCRFS1). This cytochrome bc1 complex then forms a dimer.</text>
</comment>
<comment type="subcellular location">
    <subcellularLocation>
        <location evidence="2">Mitochondrion inner membrane</location>
        <topology evidence="2">Multi-pass membrane protein</topology>
    </subcellularLocation>
</comment>
<comment type="miscellaneous">
    <text evidence="1">Heme 1 (or BL or b562) is low-potential and absorbs at about 562 nm, and heme 2 (or BH or b566) is high-potential and absorbs at about 566 nm.</text>
</comment>
<comment type="similarity">
    <text evidence="3 4">Belongs to the cytochrome b family.</text>
</comment>
<comment type="caution">
    <text evidence="2">The full-length protein contains only eight transmembrane helices, not nine as predicted by bioinformatics tools.</text>
</comment>
<name>CYB_RUPPY</name>
<accession>O78777</accession>
<dbReference type="EMBL" id="AF034726">
    <property type="protein sequence ID" value="AAC31681.1"/>
    <property type="molecule type" value="Genomic_DNA"/>
</dbReference>
<dbReference type="GO" id="GO:0005743">
    <property type="term" value="C:mitochondrial inner membrane"/>
    <property type="evidence" value="ECO:0007669"/>
    <property type="project" value="UniProtKB-SubCell"/>
</dbReference>
<dbReference type="GO" id="GO:0045275">
    <property type="term" value="C:respiratory chain complex III"/>
    <property type="evidence" value="ECO:0007669"/>
    <property type="project" value="InterPro"/>
</dbReference>
<dbReference type="GO" id="GO:0046872">
    <property type="term" value="F:metal ion binding"/>
    <property type="evidence" value="ECO:0007669"/>
    <property type="project" value="UniProtKB-KW"/>
</dbReference>
<dbReference type="GO" id="GO:0008121">
    <property type="term" value="F:ubiquinol-cytochrome-c reductase activity"/>
    <property type="evidence" value="ECO:0007669"/>
    <property type="project" value="InterPro"/>
</dbReference>
<dbReference type="GO" id="GO:0006122">
    <property type="term" value="P:mitochondrial electron transport, ubiquinol to cytochrome c"/>
    <property type="evidence" value="ECO:0007669"/>
    <property type="project" value="TreeGrafter"/>
</dbReference>
<dbReference type="CDD" id="cd00290">
    <property type="entry name" value="cytochrome_b_C"/>
    <property type="match status" value="1"/>
</dbReference>
<dbReference type="CDD" id="cd00284">
    <property type="entry name" value="Cytochrome_b_N"/>
    <property type="match status" value="1"/>
</dbReference>
<dbReference type="FunFam" id="1.20.810.10:FF:000002">
    <property type="entry name" value="Cytochrome b"/>
    <property type="match status" value="1"/>
</dbReference>
<dbReference type="Gene3D" id="1.20.810.10">
    <property type="entry name" value="Cytochrome Bc1 Complex, Chain C"/>
    <property type="match status" value="1"/>
</dbReference>
<dbReference type="InterPro" id="IPR005798">
    <property type="entry name" value="Cyt_b/b6_C"/>
</dbReference>
<dbReference type="InterPro" id="IPR036150">
    <property type="entry name" value="Cyt_b/b6_C_sf"/>
</dbReference>
<dbReference type="InterPro" id="IPR005797">
    <property type="entry name" value="Cyt_b/b6_N"/>
</dbReference>
<dbReference type="InterPro" id="IPR027387">
    <property type="entry name" value="Cytb/b6-like_sf"/>
</dbReference>
<dbReference type="InterPro" id="IPR030689">
    <property type="entry name" value="Cytochrome_b"/>
</dbReference>
<dbReference type="InterPro" id="IPR048260">
    <property type="entry name" value="Cytochrome_b_C_euk/bac"/>
</dbReference>
<dbReference type="InterPro" id="IPR048259">
    <property type="entry name" value="Cytochrome_b_N_euk/bac"/>
</dbReference>
<dbReference type="InterPro" id="IPR016174">
    <property type="entry name" value="Di-haem_cyt_TM"/>
</dbReference>
<dbReference type="PANTHER" id="PTHR19271">
    <property type="entry name" value="CYTOCHROME B"/>
    <property type="match status" value="1"/>
</dbReference>
<dbReference type="PANTHER" id="PTHR19271:SF16">
    <property type="entry name" value="CYTOCHROME B"/>
    <property type="match status" value="1"/>
</dbReference>
<dbReference type="Pfam" id="PF00032">
    <property type="entry name" value="Cytochrom_B_C"/>
    <property type="match status" value="1"/>
</dbReference>
<dbReference type="Pfam" id="PF00033">
    <property type="entry name" value="Cytochrome_B"/>
    <property type="match status" value="1"/>
</dbReference>
<dbReference type="PIRSF" id="PIRSF038885">
    <property type="entry name" value="COB"/>
    <property type="match status" value="1"/>
</dbReference>
<dbReference type="SUPFAM" id="SSF81648">
    <property type="entry name" value="a domain/subunit of cytochrome bc1 complex (Ubiquinol-cytochrome c reductase)"/>
    <property type="match status" value="1"/>
</dbReference>
<dbReference type="SUPFAM" id="SSF81342">
    <property type="entry name" value="Transmembrane di-heme cytochromes"/>
    <property type="match status" value="1"/>
</dbReference>
<dbReference type="PROSITE" id="PS51003">
    <property type="entry name" value="CYTB_CTER"/>
    <property type="match status" value="1"/>
</dbReference>
<dbReference type="PROSITE" id="PS51002">
    <property type="entry name" value="CYTB_NTER"/>
    <property type="match status" value="1"/>
</dbReference>
<proteinExistence type="inferred from homology"/>
<feature type="chain" id="PRO_0000061509" description="Cytochrome b">
    <location>
        <begin position="1"/>
        <end position="380"/>
    </location>
</feature>
<feature type="transmembrane region" description="Helical" evidence="2">
    <location>
        <begin position="33"/>
        <end position="53"/>
    </location>
</feature>
<feature type="transmembrane region" description="Helical" evidence="2">
    <location>
        <begin position="77"/>
        <end position="98"/>
    </location>
</feature>
<feature type="transmembrane region" description="Helical" evidence="2">
    <location>
        <begin position="113"/>
        <end position="133"/>
    </location>
</feature>
<feature type="transmembrane region" description="Helical" evidence="2">
    <location>
        <begin position="178"/>
        <end position="198"/>
    </location>
</feature>
<feature type="transmembrane region" description="Helical" evidence="2">
    <location>
        <begin position="226"/>
        <end position="246"/>
    </location>
</feature>
<feature type="transmembrane region" description="Helical" evidence="2">
    <location>
        <begin position="288"/>
        <end position="308"/>
    </location>
</feature>
<feature type="transmembrane region" description="Helical" evidence="2">
    <location>
        <begin position="320"/>
        <end position="340"/>
    </location>
</feature>
<feature type="transmembrane region" description="Helical" evidence="2">
    <location>
        <begin position="347"/>
        <end position="367"/>
    </location>
</feature>
<feature type="binding site" description="axial binding residue" evidence="2">
    <location>
        <position position="83"/>
    </location>
    <ligand>
        <name>heme b</name>
        <dbReference type="ChEBI" id="CHEBI:60344"/>
        <label>b562</label>
    </ligand>
    <ligandPart>
        <name>Fe</name>
        <dbReference type="ChEBI" id="CHEBI:18248"/>
    </ligandPart>
</feature>
<feature type="binding site" description="axial binding residue" evidence="2">
    <location>
        <position position="97"/>
    </location>
    <ligand>
        <name>heme b</name>
        <dbReference type="ChEBI" id="CHEBI:60344"/>
        <label>b566</label>
    </ligand>
    <ligandPart>
        <name>Fe</name>
        <dbReference type="ChEBI" id="CHEBI:18248"/>
    </ligandPart>
</feature>
<feature type="binding site" description="axial binding residue" evidence="2">
    <location>
        <position position="182"/>
    </location>
    <ligand>
        <name>heme b</name>
        <dbReference type="ChEBI" id="CHEBI:60344"/>
        <label>b562</label>
    </ligand>
    <ligandPart>
        <name>Fe</name>
        <dbReference type="ChEBI" id="CHEBI:18248"/>
    </ligandPart>
</feature>
<feature type="binding site" description="axial binding residue" evidence="2">
    <location>
        <position position="196"/>
    </location>
    <ligand>
        <name>heme b</name>
        <dbReference type="ChEBI" id="CHEBI:60344"/>
        <label>b566</label>
    </ligand>
    <ligandPart>
        <name>Fe</name>
        <dbReference type="ChEBI" id="CHEBI:18248"/>
    </ligandPart>
</feature>
<feature type="binding site" evidence="2">
    <location>
        <position position="201"/>
    </location>
    <ligand>
        <name>a ubiquinone</name>
        <dbReference type="ChEBI" id="CHEBI:16389"/>
    </ligand>
</feature>
<sequence>MTNIRKTHPLMKIVNNAFIDLPAPSNISSWWNFGSLLGICLILQILTGLFLAMHYTSDTTMAFSSVTHICRDVNYGWIIRYMHANGASMFFICLFMHVGRGLYYGSYTFLETWNIGVILLLTTMATAFMGYVLPWGQMSFWGATVITNLLSAIPYIGMDLVEWIWGGFSVDKATLTRFFAFHFILPFIIAALAMVHLLFLHETGSNNPTGIPSDADXIPFHPYYTIKDILGAMLLILTLMLLVLFTPDLLGDPDNYTPANPLNTPPHIKPEWYFLFAYAILRSIPNKLGGVLALXLSILILVLVPLLHTSKQRSMMFRPISQCMFWILVADLLTLTWIGGQPVEHPYIIIGQLASIMYFLIILVMMPVASTIENNLLKWK</sequence>
<protein>
    <recommendedName>
        <fullName>Cytochrome b</fullName>
    </recommendedName>
    <alternativeName>
        <fullName>Complex III subunit 3</fullName>
    </alternativeName>
    <alternativeName>
        <fullName>Complex III subunit III</fullName>
    </alternativeName>
    <alternativeName>
        <fullName>Cytochrome b-c1 complex subunit 3</fullName>
    </alternativeName>
    <alternativeName>
        <fullName>Ubiquinol-cytochrome-c reductase complex cytochrome b subunit</fullName>
    </alternativeName>
</protein>
<reference key="1">
    <citation type="journal article" date="1998" name="J. Mammal. Evol.">
        <title>Molecular systematics of the subfamily Caprinae (Artiodactyla, Bovidae) as determined from cytochrome b sequences.</title>
        <authorList>
            <person name="Hassanin A."/>
            <person name="Pasquet E."/>
            <person name="Vigne J.-D."/>
        </authorList>
    </citation>
    <scope>NUCLEOTIDE SEQUENCE [GENOMIC DNA]</scope>
</reference>